<feature type="chain" id="PRO_0000457441" description="Aquaporin-2">
    <location>
        <begin position="1"/>
        <end position="377"/>
    </location>
</feature>
<feature type="topological domain" description="Cytoplasmic" evidence="7">
    <location>
        <begin position="1"/>
        <end position="14"/>
    </location>
</feature>
<feature type="transmembrane region" description="Helical" evidence="2">
    <location>
        <begin position="15"/>
        <end position="35"/>
    </location>
</feature>
<feature type="topological domain" description="Extracellular" evidence="7">
    <location>
        <begin position="36"/>
        <end position="56"/>
    </location>
</feature>
<feature type="transmembrane region" description="Helical" evidence="2">
    <location>
        <begin position="57"/>
        <end position="77"/>
    </location>
</feature>
<feature type="topological domain" description="Cytoplasmic" evidence="7">
    <location>
        <begin position="78"/>
        <end position="87"/>
    </location>
</feature>
<feature type="transmembrane region" description="Helical" evidence="2">
    <location>
        <begin position="88"/>
        <end position="108"/>
    </location>
</feature>
<feature type="topological domain" description="Extracellular" evidence="7">
    <location>
        <begin position="109"/>
        <end position="144"/>
    </location>
</feature>
<feature type="transmembrane region" description="Helical" evidence="2">
    <location>
        <begin position="145"/>
        <end position="165"/>
    </location>
</feature>
<feature type="topological domain" description="Cytoplasmic" evidence="7">
    <location>
        <begin position="166"/>
        <end position="171"/>
    </location>
</feature>
<feature type="transmembrane region" description="Helical" evidence="2">
    <location>
        <begin position="172"/>
        <end position="192"/>
    </location>
</feature>
<feature type="topological domain" description="Extracellular" evidence="7">
    <location>
        <begin position="193"/>
        <end position="215"/>
    </location>
</feature>
<feature type="transmembrane region" description="Helical" evidence="2">
    <location>
        <begin position="216"/>
        <end position="236"/>
    </location>
</feature>
<feature type="topological domain" description="Cytoplasmic" evidence="7">
    <location>
        <begin position="237"/>
        <end position="377"/>
    </location>
</feature>
<feature type="region of interest" description="Disordered" evidence="4">
    <location>
        <begin position="278"/>
        <end position="332"/>
    </location>
</feature>
<feature type="region of interest" description="Disordered" evidence="4">
    <location>
        <begin position="358"/>
        <end position="377"/>
    </location>
</feature>
<feature type="short sequence motif" description="NPA 1" evidence="8">
    <location>
        <begin position="85"/>
        <end position="87"/>
    </location>
</feature>
<feature type="short sequence motif" description="NPA 2" evidence="8">
    <location>
        <begin position="198"/>
        <end position="200"/>
    </location>
</feature>
<feature type="compositionally biased region" description="Polar residues" evidence="4">
    <location>
        <begin position="315"/>
        <end position="328"/>
    </location>
</feature>
<feature type="compositionally biased region" description="Polar residues" evidence="4">
    <location>
        <begin position="368"/>
        <end position="377"/>
    </location>
</feature>
<feature type="glycosylation site" description="N-linked (GlcNAc...) asparagine" evidence="3">
    <location>
        <position position="40"/>
    </location>
</feature>
<dbReference type="EMBL" id="CP009805">
    <property type="protein sequence ID" value="ATZ45287.1"/>
    <property type="molecule type" value="Genomic_DNA"/>
</dbReference>
<dbReference type="SMR" id="A0A384J441"/>
<dbReference type="EnsemblFungi" id="Bcin01g00950.1">
    <property type="protein sequence ID" value="Bcin01p00950.1"/>
    <property type="gene ID" value="Bcin01g00950"/>
</dbReference>
<dbReference type="KEGG" id="bfu:BCIN_01g00950"/>
<dbReference type="VEuPathDB" id="FungiDB:Bcin01g00950"/>
<dbReference type="OMA" id="PARILMI"/>
<dbReference type="OrthoDB" id="3222at2759"/>
<dbReference type="Proteomes" id="UP000001798">
    <property type="component" value="Chromosome bcin01"/>
</dbReference>
<dbReference type="GO" id="GO:0005886">
    <property type="term" value="C:plasma membrane"/>
    <property type="evidence" value="ECO:0007669"/>
    <property type="project" value="TreeGrafter"/>
</dbReference>
<dbReference type="GO" id="GO:0015250">
    <property type="term" value="F:water channel activity"/>
    <property type="evidence" value="ECO:0007669"/>
    <property type="project" value="TreeGrafter"/>
</dbReference>
<dbReference type="FunFam" id="1.20.1080.10:FF:000014">
    <property type="entry name" value="Aquaporin 1"/>
    <property type="match status" value="1"/>
</dbReference>
<dbReference type="Gene3D" id="1.20.1080.10">
    <property type="entry name" value="Glycerol uptake facilitator protein"/>
    <property type="match status" value="1"/>
</dbReference>
<dbReference type="InterPro" id="IPR023271">
    <property type="entry name" value="Aquaporin-like"/>
</dbReference>
<dbReference type="InterPro" id="IPR034294">
    <property type="entry name" value="Aquaporin_transptr"/>
</dbReference>
<dbReference type="InterPro" id="IPR000425">
    <property type="entry name" value="MIP"/>
</dbReference>
<dbReference type="PANTHER" id="PTHR19139">
    <property type="entry name" value="AQUAPORIN TRANSPORTER"/>
    <property type="match status" value="1"/>
</dbReference>
<dbReference type="PANTHER" id="PTHR19139:SF199">
    <property type="entry name" value="MIP17260P"/>
    <property type="match status" value="1"/>
</dbReference>
<dbReference type="Pfam" id="PF00230">
    <property type="entry name" value="MIP"/>
    <property type="match status" value="1"/>
</dbReference>
<dbReference type="PRINTS" id="PR00783">
    <property type="entry name" value="MINTRINSICP"/>
</dbReference>
<dbReference type="SUPFAM" id="SSF81338">
    <property type="entry name" value="Aquaporin-like"/>
    <property type="match status" value="1"/>
</dbReference>
<reference key="1">
    <citation type="journal article" date="2011" name="PLoS Genet.">
        <title>Genomic analysis of the necrotrophic fungal pathogens Sclerotinia sclerotiorum and Botrytis cinerea.</title>
        <authorList>
            <person name="Amselem J."/>
            <person name="Cuomo C.A."/>
            <person name="van Kan J.A.L."/>
            <person name="Viaud M."/>
            <person name="Benito E.P."/>
            <person name="Couloux A."/>
            <person name="Coutinho P.M."/>
            <person name="de Vries R.P."/>
            <person name="Dyer P.S."/>
            <person name="Fillinger S."/>
            <person name="Fournier E."/>
            <person name="Gout L."/>
            <person name="Hahn M."/>
            <person name="Kohn L."/>
            <person name="Lapalu N."/>
            <person name="Plummer K.M."/>
            <person name="Pradier J.-M."/>
            <person name="Quevillon E."/>
            <person name="Sharon A."/>
            <person name="Simon A."/>
            <person name="ten Have A."/>
            <person name="Tudzynski B."/>
            <person name="Tudzynski P."/>
            <person name="Wincker P."/>
            <person name="Andrew M."/>
            <person name="Anthouard V."/>
            <person name="Beever R.E."/>
            <person name="Beffa R."/>
            <person name="Benoit I."/>
            <person name="Bouzid O."/>
            <person name="Brault B."/>
            <person name="Chen Z."/>
            <person name="Choquer M."/>
            <person name="Collemare J."/>
            <person name="Cotton P."/>
            <person name="Danchin E.G."/>
            <person name="Da Silva C."/>
            <person name="Gautier A."/>
            <person name="Giraud C."/>
            <person name="Giraud T."/>
            <person name="Gonzalez C."/>
            <person name="Grossetete S."/>
            <person name="Gueldener U."/>
            <person name="Henrissat B."/>
            <person name="Howlett B.J."/>
            <person name="Kodira C."/>
            <person name="Kretschmer M."/>
            <person name="Lappartient A."/>
            <person name="Leroch M."/>
            <person name="Levis C."/>
            <person name="Mauceli E."/>
            <person name="Neuveglise C."/>
            <person name="Oeser B."/>
            <person name="Pearson M."/>
            <person name="Poulain J."/>
            <person name="Poussereau N."/>
            <person name="Quesneville H."/>
            <person name="Rascle C."/>
            <person name="Schumacher J."/>
            <person name="Segurens B."/>
            <person name="Sexton A."/>
            <person name="Silva E."/>
            <person name="Sirven C."/>
            <person name="Soanes D.M."/>
            <person name="Talbot N.J."/>
            <person name="Templeton M."/>
            <person name="Yandava C."/>
            <person name="Yarden O."/>
            <person name="Zeng Q."/>
            <person name="Rollins J.A."/>
            <person name="Lebrun M.-H."/>
            <person name="Dickman M."/>
        </authorList>
    </citation>
    <scope>NUCLEOTIDE SEQUENCE [LARGE SCALE GENOMIC DNA]</scope>
    <source>
        <strain>B05.10</strain>
    </source>
</reference>
<reference key="2">
    <citation type="journal article" date="2012" name="Eukaryot. Cell">
        <title>Genome update of Botrytis cinerea strains B05.10 and T4.</title>
        <authorList>
            <person name="Staats M."/>
            <person name="van Kan J.A.L."/>
        </authorList>
    </citation>
    <scope>NUCLEOTIDE SEQUENCE [LARGE SCALE GENOMIC DNA]</scope>
    <source>
        <strain>B05.10</strain>
    </source>
</reference>
<reference key="3">
    <citation type="journal article" date="2017" name="Mol. Plant Pathol.">
        <title>A gapless genome sequence of the fungus Botrytis cinerea.</title>
        <authorList>
            <person name="van Kan J.A.L."/>
            <person name="Stassen J.H.M."/>
            <person name="Mosbach A."/>
            <person name="van der Lee T.A.J."/>
            <person name="Faino L."/>
            <person name="Farmer A.D."/>
            <person name="Papasotiriou D.G."/>
            <person name="Zhou S."/>
            <person name="Seidl M.F."/>
            <person name="Cottam E."/>
            <person name="Edel D."/>
            <person name="Hahn M."/>
            <person name="Schwartz D.C."/>
            <person name="Dietrich R.A."/>
            <person name="Widdison S."/>
            <person name="Scalliet G."/>
        </authorList>
    </citation>
    <scope>NUCLEOTIDE SEQUENCE [LARGE SCALE GENOMIC DNA]</scope>
    <source>
        <strain>B05.10</strain>
    </source>
</reference>
<reference key="4">
    <citation type="journal article" date="2016" name="New Phytol.">
        <title>Aquaporin8 regulates cellular development and reactive oxygen species production, a critical component of virulence in Botrytis cinerea.</title>
        <authorList>
            <person name="An B."/>
            <person name="Li B."/>
            <person name="Li H."/>
            <person name="Zhang Z."/>
            <person name="Qin G."/>
            <person name="Tian S."/>
        </authorList>
    </citation>
    <scope>FUNCTION</scope>
    <scope>DOMAIN</scope>
    <scope>INDUCTION</scope>
    <scope>DISRUPTION PHENOTYPE</scope>
</reference>
<proteinExistence type="evidence at transcript level"/>
<comment type="function">
    <text evidence="5 8">Water channel required to facilitate the transport of water across membranes (Probable). Involved in conidiation (PubMed:26527167).</text>
</comment>
<comment type="catalytic activity">
    <reaction evidence="8">
        <text>H2O(in) = H2O(out)</text>
        <dbReference type="Rhea" id="RHEA:29667"/>
        <dbReference type="ChEBI" id="CHEBI:15377"/>
    </reaction>
</comment>
<comment type="catalytic activity">
    <reaction evidence="1">
        <text>glycerol(in) = glycerol(out)</text>
        <dbReference type="Rhea" id="RHEA:29675"/>
        <dbReference type="ChEBI" id="CHEBI:17754"/>
    </reaction>
</comment>
<comment type="subcellular location">
    <subcellularLocation>
        <location evidence="2">Membrane</location>
        <topology evidence="2">Multi-pass membrane protein</topology>
    </subcellularLocation>
</comment>
<comment type="induction">
    <text evidence="5">Expression is higher in conidia than in vegetative hyphae.</text>
</comment>
<comment type="domain">
    <text evidence="8">Aquaporins contain two tandem repeats each containing three membrane-spanning domains and a pore-forming loop with the signature motif Asn-Pro-Ala (NPA).</text>
</comment>
<comment type="disruption phenotype">
    <text evidence="5">Leads to a slight reduction in the vegetative growth rate and a significant increase in conidiation.</text>
</comment>
<comment type="similarity">
    <text evidence="7">Belongs to the MIP/aquaporin (TC 1.A.8) family.</text>
</comment>
<keyword id="KW-0325">Glycoprotein</keyword>
<keyword id="KW-0472">Membrane</keyword>
<keyword id="KW-1185">Reference proteome</keyword>
<keyword id="KW-0677">Repeat</keyword>
<keyword id="KW-0812">Transmembrane</keyword>
<keyword id="KW-1133">Transmembrane helix</keyword>
<keyword id="KW-0813">Transport</keyword>
<gene>
    <name evidence="6" type="primary">AQP2</name>
    <name type="ORF">BCIN_01g00950</name>
</gene>
<accession>A0A384J441</accession>
<name>AQP2_BOTFB</name>
<organism>
    <name type="scientific">Botryotinia fuckeliana (strain B05.10)</name>
    <name type="common">Noble rot fungus</name>
    <name type="synonym">Botrytis cinerea</name>
    <dbReference type="NCBI Taxonomy" id="332648"/>
    <lineage>
        <taxon>Eukaryota</taxon>
        <taxon>Fungi</taxon>
        <taxon>Dikarya</taxon>
        <taxon>Ascomycota</taxon>
        <taxon>Pezizomycotina</taxon>
        <taxon>Leotiomycetes</taxon>
        <taxon>Helotiales</taxon>
        <taxon>Sclerotiniaceae</taxon>
        <taxon>Botrytis</taxon>
    </lineage>
</organism>
<evidence type="ECO:0000250" key="1">
    <source>
        <dbReference type="UniProtKB" id="P41181"/>
    </source>
</evidence>
<evidence type="ECO:0000255" key="2"/>
<evidence type="ECO:0000255" key="3">
    <source>
        <dbReference type="PROSITE-ProRule" id="PRU00498"/>
    </source>
</evidence>
<evidence type="ECO:0000256" key="4">
    <source>
        <dbReference type="SAM" id="MobiDB-lite"/>
    </source>
</evidence>
<evidence type="ECO:0000269" key="5">
    <source>
    </source>
</evidence>
<evidence type="ECO:0000303" key="6">
    <source>
    </source>
</evidence>
<evidence type="ECO:0000305" key="7"/>
<evidence type="ECO:0000305" key="8">
    <source>
    </source>
</evidence>
<protein>
    <recommendedName>
        <fullName evidence="6">Aquaporin-2</fullName>
    </recommendedName>
</protein>
<sequence>MAANKGINGGIKNHFIAFLGEFVGTFLFLFFAYGGTQTANQTSQKNPSIVASPDINQLLYIALIFGFSLTVNVWIFFRVSGGLFNPAVTIALCLVGVVGPVRSIFIFIAQVVASIAAAAAVRGLLPGDTVLFSCALAPGTSIAQGLFLEMFFTIELVFTILMLAAEKTKVTFVAPVGIGLSLFVAELMGVAWTGGALNPARAFGAEVIGGFRGYHWIYWLGPLMGAVLAAGFYKVIKFLNYEQVNGEQDLSAEEKQLKDEKKARKKEERRRKQNFAGLFQTGRMHHHHHANTRNATVNDAGDGRPNSAPPYTEPPAQQQTWPHSASTIRENEDFSRFAEMGSQDGIVITREQPAEQYRLSGERYVQDANAQNRAKTP</sequence>